<dbReference type="EMBL" id="AC007321">
    <property type="status" value="NOT_ANNOTATED_CDS"/>
    <property type="molecule type" value="Genomic_DNA"/>
</dbReference>
<dbReference type="EMBL" id="AC013470">
    <property type="status" value="NOT_ANNOTATED_CDS"/>
    <property type="molecule type" value="Genomic_DNA"/>
</dbReference>
<dbReference type="EMBL" id="CH471073">
    <property type="protein sequence ID" value="EAW93644.1"/>
    <property type="status" value="ALT_SEQ"/>
    <property type="molecule type" value="Genomic_DNA"/>
</dbReference>
<dbReference type="EMBL" id="BC144319">
    <property type="protein sequence ID" value="AAI44320.1"/>
    <property type="status" value="ALT_FRAME"/>
    <property type="molecule type" value="mRNA"/>
</dbReference>
<dbReference type="EMBL" id="AK075525">
    <property type="protein sequence ID" value="BAC11671.1"/>
    <property type="status" value="ALT_SEQ"/>
    <property type="molecule type" value="mRNA"/>
</dbReference>
<dbReference type="EMBL" id="AK027618">
    <property type="protein sequence ID" value="BAB55237.1"/>
    <property type="status" value="ALT_INIT"/>
    <property type="molecule type" value="mRNA"/>
</dbReference>
<dbReference type="CCDS" id="CCDS47544.1">
    <molecule id="Q8N2E2-1"/>
</dbReference>
<dbReference type="RefSeq" id="NP_001129396.1">
    <molecule id="Q8N2E2-1"/>
    <property type="nucleotide sequence ID" value="NM_001135924.3"/>
</dbReference>
<dbReference type="RefSeq" id="XP_005249698.1">
    <property type="nucleotide sequence ID" value="XM_005249641.1"/>
</dbReference>
<dbReference type="SMR" id="Q8N2E2"/>
<dbReference type="BioGRID" id="128755">
    <property type="interactions" value="139"/>
</dbReference>
<dbReference type="FunCoup" id="Q8N2E2">
    <property type="interactions" value="265"/>
</dbReference>
<dbReference type="IntAct" id="Q8N2E2">
    <property type="interactions" value="62"/>
</dbReference>
<dbReference type="STRING" id="9606.ENSP00000275358"/>
<dbReference type="GlyCosmos" id="Q8N2E2">
    <property type="glycosylation" value="3 sites, No reported glycans"/>
</dbReference>
<dbReference type="GlyGen" id="Q8N2E2">
    <property type="glycosylation" value="4 sites"/>
</dbReference>
<dbReference type="iPTMnet" id="Q8N2E2"/>
<dbReference type="PhosphoSitePlus" id="Q8N2E2"/>
<dbReference type="BioMuta" id="VWDE"/>
<dbReference type="DMDM" id="327478608"/>
<dbReference type="MassIVE" id="Q8N2E2"/>
<dbReference type="PaxDb" id="9606-ENSP00000275358"/>
<dbReference type="PeptideAtlas" id="Q8N2E2"/>
<dbReference type="ProteomicsDB" id="71685">
    <molecule id="Q8N2E2-1"/>
</dbReference>
<dbReference type="Pumba" id="Q8N2E2"/>
<dbReference type="Antibodypedia" id="66337">
    <property type="antibodies" value="11 antibodies from 5 providers"/>
</dbReference>
<dbReference type="DNASU" id="221806"/>
<dbReference type="Ensembl" id="ENST00000275358.8">
    <molecule id="Q8N2E2-1"/>
    <property type="protein sequence ID" value="ENSP00000275358.3"/>
    <property type="gene ID" value="ENSG00000146530.15"/>
</dbReference>
<dbReference type="GeneID" id="221806"/>
<dbReference type="KEGG" id="hsa:221806"/>
<dbReference type="MANE-Select" id="ENST00000275358.8">
    <property type="protein sequence ID" value="ENSP00000275358.3"/>
    <property type="RefSeq nucleotide sequence ID" value="NM_001135924.3"/>
    <property type="RefSeq protein sequence ID" value="NP_001129396.1"/>
</dbReference>
<dbReference type="UCSC" id="uc003ssj.3">
    <molecule id="Q8N2E2-1"/>
    <property type="organism name" value="human"/>
</dbReference>
<dbReference type="AGR" id="HGNC:21897"/>
<dbReference type="CTD" id="221806"/>
<dbReference type="DisGeNET" id="221806"/>
<dbReference type="GeneCards" id="VWDE"/>
<dbReference type="HGNC" id="HGNC:21897">
    <property type="gene designation" value="VWDE"/>
</dbReference>
<dbReference type="HPA" id="ENSG00000146530">
    <property type="expression patterns" value="Tissue enhanced (epididymis, salivary gland, thyroid gland)"/>
</dbReference>
<dbReference type="neXtProt" id="NX_Q8N2E2"/>
<dbReference type="OpenTargets" id="ENSG00000146530"/>
<dbReference type="VEuPathDB" id="HostDB:ENSG00000146530"/>
<dbReference type="eggNOG" id="KOG1217">
    <property type="taxonomic scope" value="Eukaryota"/>
</dbReference>
<dbReference type="GeneTree" id="ENSGT00940000160835"/>
<dbReference type="HOGENOM" id="CLU_002130_0_0_1"/>
<dbReference type="InParanoid" id="Q8N2E2"/>
<dbReference type="OMA" id="GNLCTCA"/>
<dbReference type="OrthoDB" id="382013at2759"/>
<dbReference type="PAN-GO" id="Q8N2E2">
    <property type="GO annotations" value="4 GO annotations based on evolutionary models"/>
</dbReference>
<dbReference type="PhylomeDB" id="Q8N2E2"/>
<dbReference type="TreeFam" id="TF351702"/>
<dbReference type="PathwayCommons" id="Q8N2E2"/>
<dbReference type="SignaLink" id="Q8N2E2"/>
<dbReference type="BioGRID-ORCS" id="221806">
    <property type="hits" value="12 hits in 1152 CRISPR screens"/>
</dbReference>
<dbReference type="ChiTaRS" id="VWDE">
    <property type="organism name" value="human"/>
</dbReference>
<dbReference type="GenomeRNAi" id="221806"/>
<dbReference type="Pharos" id="Q8N2E2">
    <property type="development level" value="Tdark"/>
</dbReference>
<dbReference type="PRO" id="PR:Q8N2E2"/>
<dbReference type="Proteomes" id="UP000005640">
    <property type="component" value="Chromosome 7"/>
</dbReference>
<dbReference type="RNAct" id="Q8N2E2">
    <property type="molecule type" value="protein"/>
</dbReference>
<dbReference type="Bgee" id="ENSG00000146530">
    <property type="expression patterns" value="Expressed in pituitary gland and 109 other cell types or tissues"/>
</dbReference>
<dbReference type="ExpressionAtlas" id="Q8N2E2">
    <property type="expression patterns" value="baseline and differential"/>
</dbReference>
<dbReference type="GO" id="GO:0009986">
    <property type="term" value="C:cell surface"/>
    <property type="evidence" value="ECO:0000318"/>
    <property type="project" value="GO_Central"/>
</dbReference>
<dbReference type="GO" id="GO:0005576">
    <property type="term" value="C:extracellular region"/>
    <property type="evidence" value="ECO:0000318"/>
    <property type="project" value="GO_Central"/>
</dbReference>
<dbReference type="GO" id="GO:0005102">
    <property type="term" value="F:signaling receptor binding"/>
    <property type="evidence" value="ECO:0000318"/>
    <property type="project" value="GO_Central"/>
</dbReference>
<dbReference type="FunFam" id="2.10.25.10:FF:000499">
    <property type="entry name" value="Predicted protein"/>
    <property type="match status" value="1"/>
</dbReference>
<dbReference type="FunFam" id="2.10.25.10:FF:000490">
    <property type="entry name" value="von Willebrand factor D and EGF domain-containing protein"/>
    <property type="match status" value="1"/>
</dbReference>
<dbReference type="FunFam" id="2.10.25.10:FF:000595">
    <property type="entry name" value="von Willebrand factor D and EGF domain-containing protein"/>
    <property type="match status" value="1"/>
</dbReference>
<dbReference type="FunFam" id="2.60.120.260:FF:000100">
    <property type="entry name" value="von Willebrand factor D and EGF domain-containing protein"/>
    <property type="match status" value="1"/>
</dbReference>
<dbReference type="FunFam" id="2.10.25.10:FF:000865">
    <property type="entry name" value="von Willebrand factor D and EGF domains"/>
    <property type="match status" value="1"/>
</dbReference>
<dbReference type="FunFam" id="2.10.25.10:FF:001218">
    <property type="entry name" value="von Willebrand factor D and EGF domains"/>
    <property type="match status" value="1"/>
</dbReference>
<dbReference type="Gene3D" id="2.60.120.260">
    <property type="entry name" value="Galactose-binding domain-like"/>
    <property type="match status" value="1"/>
</dbReference>
<dbReference type="Gene3D" id="2.10.25.10">
    <property type="entry name" value="Laminin"/>
    <property type="match status" value="6"/>
</dbReference>
<dbReference type="InterPro" id="IPR050969">
    <property type="entry name" value="Dev_Signal_Modulators"/>
</dbReference>
<dbReference type="InterPro" id="IPR000742">
    <property type="entry name" value="EGF-like_dom"/>
</dbReference>
<dbReference type="InterPro" id="IPR001846">
    <property type="entry name" value="VWF_type-D"/>
</dbReference>
<dbReference type="PANTHER" id="PTHR14949">
    <property type="entry name" value="EGF-LIKE-DOMAIN, MULTIPLE 7, 8"/>
    <property type="match status" value="1"/>
</dbReference>
<dbReference type="PANTHER" id="PTHR14949:SF53">
    <property type="entry name" value="VON WILLEBRAND FACTOR D AND EGF DOMAIN-CONTAINING PROTEIN"/>
    <property type="match status" value="1"/>
</dbReference>
<dbReference type="Pfam" id="PF23283">
    <property type="entry name" value="D8C_UMOD"/>
    <property type="match status" value="1"/>
</dbReference>
<dbReference type="Pfam" id="PF00094">
    <property type="entry name" value="VWD"/>
    <property type="match status" value="1"/>
</dbReference>
<dbReference type="SMART" id="SM00181">
    <property type="entry name" value="EGF"/>
    <property type="match status" value="12"/>
</dbReference>
<dbReference type="SMART" id="SM00216">
    <property type="entry name" value="VWD"/>
    <property type="match status" value="1"/>
</dbReference>
<dbReference type="SUPFAM" id="SSF57196">
    <property type="entry name" value="EGF/Laminin"/>
    <property type="match status" value="2"/>
</dbReference>
<dbReference type="PROSITE" id="PS00022">
    <property type="entry name" value="EGF_1"/>
    <property type="match status" value="9"/>
</dbReference>
<dbReference type="PROSITE" id="PS01186">
    <property type="entry name" value="EGF_2"/>
    <property type="match status" value="6"/>
</dbReference>
<dbReference type="PROSITE" id="PS50026">
    <property type="entry name" value="EGF_3"/>
    <property type="match status" value="7"/>
</dbReference>
<dbReference type="PROSITE" id="PS51233">
    <property type="entry name" value="VWFD"/>
    <property type="match status" value="1"/>
</dbReference>
<accession>Q8N2E2</accession>
<accession>B7ZM77</accession>
<accession>Q96SQ3</accession>
<feature type="signal peptide" evidence="2">
    <location>
        <begin position="1"/>
        <end position="20"/>
    </location>
</feature>
<feature type="chain" id="PRO_0000329441" description="von Willebrand factor D and EGF domain-containing protein">
    <location>
        <begin position="21"/>
        <end position="1590"/>
    </location>
</feature>
<feature type="domain" description="VWFD" evidence="4">
    <location>
        <begin position="423"/>
        <end position="606"/>
    </location>
</feature>
<feature type="domain" description="EGF-like 1" evidence="3">
    <location>
        <begin position="1177"/>
        <end position="1216"/>
    </location>
</feature>
<feature type="domain" description="EGF-like 2" evidence="3">
    <location>
        <begin position="1294"/>
        <end position="1326"/>
    </location>
</feature>
<feature type="domain" description="EGF-like 3" evidence="3">
    <location>
        <begin position="1358"/>
        <end position="1390"/>
    </location>
</feature>
<feature type="domain" description="EGF-like 4" evidence="3">
    <location>
        <begin position="1422"/>
        <end position="1454"/>
    </location>
</feature>
<feature type="domain" description="EGF-like 5" evidence="3">
    <location>
        <begin position="1455"/>
        <end position="1486"/>
    </location>
</feature>
<feature type="domain" description="EGF-like 6" evidence="3">
    <location>
        <begin position="1518"/>
        <end position="1550"/>
    </location>
</feature>
<feature type="domain" description="EGF-like 7" evidence="3">
    <location>
        <begin position="1551"/>
        <end position="1582"/>
    </location>
</feature>
<feature type="region of interest" description="Disordered" evidence="5">
    <location>
        <begin position="1268"/>
        <end position="1288"/>
    </location>
</feature>
<feature type="compositionally biased region" description="Basic and acidic residues" evidence="5">
    <location>
        <begin position="1268"/>
        <end position="1280"/>
    </location>
</feature>
<feature type="glycosylation site" description="N-linked (GlcNAc...) asparagine" evidence="2">
    <location>
        <position position="367"/>
    </location>
</feature>
<feature type="glycosylation site" description="N-linked (GlcNAc...) asparagine" evidence="2">
    <location>
        <position position="703"/>
    </location>
</feature>
<feature type="glycosylation site" description="N-linked (GlcNAc...) asparagine" evidence="2">
    <location>
        <position position="968"/>
    </location>
</feature>
<feature type="disulfide bond" evidence="4">
    <location>
        <begin position="425"/>
        <end position="565"/>
    </location>
</feature>
<feature type="disulfide bond" evidence="4">
    <location>
        <begin position="468"/>
        <end position="477"/>
    </location>
</feature>
<feature type="disulfide bond" evidence="1">
    <location>
        <begin position="1181"/>
        <end position="1189"/>
    </location>
</feature>
<feature type="disulfide bond" evidence="1">
    <location>
        <begin position="1183"/>
        <end position="1204"/>
    </location>
</feature>
<feature type="disulfide bond" evidence="1">
    <location>
        <begin position="1206"/>
        <end position="1215"/>
    </location>
</feature>
<feature type="disulfide bond" evidence="1">
    <location>
        <begin position="1298"/>
        <end position="1308"/>
    </location>
</feature>
<feature type="disulfide bond" evidence="1">
    <location>
        <begin position="1302"/>
        <end position="1314"/>
    </location>
</feature>
<feature type="disulfide bond" evidence="1">
    <location>
        <begin position="1316"/>
        <end position="1325"/>
    </location>
</feature>
<feature type="disulfide bond" evidence="1">
    <location>
        <begin position="1362"/>
        <end position="1372"/>
    </location>
</feature>
<feature type="disulfide bond" evidence="1">
    <location>
        <begin position="1366"/>
        <end position="1378"/>
    </location>
</feature>
<feature type="disulfide bond" evidence="1">
    <location>
        <begin position="1380"/>
        <end position="1389"/>
    </location>
</feature>
<feature type="disulfide bond" evidence="1">
    <location>
        <begin position="1426"/>
        <end position="1436"/>
    </location>
</feature>
<feature type="disulfide bond" evidence="1">
    <location>
        <begin position="1430"/>
        <end position="1442"/>
    </location>
</feature>
<feature type="disulfide bond" evidence="1">
    <location>
        <begin position="1444"/>
        <end position="1453"/>
    </location>
</feature>
<feature type="disulfide bond" evidence="1">
    <location>
        <begin position="1458"/>
        <end position="1468"/>
    </location>
</feature>
<feature type="disulfide bond" evidence="1">
    <location>
        <begin position="1462"/>
        <end position="1474"/>
    </location>
</feature>
<feature type="disulfide bond" evidence="1">
    <location>
        <begin position="1522"/>
        <end position="1532"/>
    </location>
</feature>
<feature type="disulfide bond" evidence="1">
    <location>
        <begin position="1526"/>
        <end position="1538"/>
    </location>
</feature>
<feature type="disulfide bond" evidence="1">
    <location>
        <begin position="1540"/>
        <end position="1549"/>
    </location>
</feature>
<feature type="disulfide bond" evidence="1">
    <location>
        <begin position="1554"/>
        <end position="1564"/>
    </location>
</feature>
<feature type="disulfide bond" evidence="1">
    <location>
        <begin position="1558"/>
        <end position="1570"/>
    </location>
</feature>
<feature type="disulfide bond" evidence="1">
    <location>
        <begin position="1572"/>
        <end position="1581"/>
    </location>
</feature>
<feature type="splice variant" id="VSP_055465" description="In isoform 2." evidence="8">
    <location>
        <begin position="1"/>
        <end position="546"/>
    </location>
</feature>
<feature type="sequence variant" id="VAR_071061" description="In dbSNP:rs963323." evidence="7">
    <original>S</original>
    <variation>F</variation>
    <location>
        <position position="607"/>
    </location>
</feature>
<feature type="sequence variant" id="VAR_047871" description="In dbSNP:rs6460939." evidence="7">
    <original>K</original>
    <variation>N</variation>
    <location>
        <position position="964"/>
    </location>
</feature>
<feature type="sequence variant" id="VAR_047872" description="In dbSNP:rs2053380." evidence="7">
    <original>T</original>
    <variation>M</variation>
    <location>
        <position position="1032"/>
    </location>
</feature>
<feature type="sequence variant" id="VAR_047873" description="In dbSNP:rs6967385." evidence="6">
    <original>Q</original>
    <variation>K</variation>
    <location>
        <position position="1256"/>
    </location>
</feature>
<feature type="sequence variant" id="VAR_047874" description="In dbSNP:rs2192828." evidence="6">
    <original>F</original>
    <variation>C</variation>
    <location>
        <position position="1485"/>
    </location>
</feature>
<feature type="sequence conflict" description="In Ref. 3; AAI44320." evidence="9" ref="3">
    <original>C</original>
    <variation>F</variation>
    <location>
        <position position="1078"/>
    </location>
</feature>
<feature type="sequence conflict" description="In Ref. 5; BAB55237." evidence="9" ref="5">
    <original>Q</original>
    <variation>L</variation>
    <location>
        <position position="1106"/>
    </location>
</feature>
<feature type="sequence conflict" description="In Ref. 5; BAB55237." evidence="9" ref="5">
    <original>T</original>
    <variation>I</variation>
    <location>
        <position position="1371"/>
    </location>
</feature>
<proteinExistence type="evidence at protein level"/>
<organism>
    <name type="scientific">Homo sapiens</name>
    <name type="common">Human</name>
    <dbReference type="NCBI Taxonomy" id="9606"/>
    <lineage>
        <taxon>Eukaryota</taxon>
        <taxon>Metazoa</taxon>
        <taxon>Chordata</taxon>
        <taxon>Craniata</taxon>
        <taxon>Vertebrata</taxon>
        <taxon>Euteleostomi</taxon>
        <taxon>Mammalia</taxon>
        <taxon>Eutheria</taxon>
        <taxon>Euarchontoglires</taxon>
        <taxon>Primates</taxon>
        <taxon>Haplorrhini</taxon>
        <taxon>Catarrhini</taxon>
        <taxon>Hominidae</taxon>
        <taxon>Homo</taxon>
    </lineage>
</organism>
<name>VWDE_HUMAN</name>
<gene>
    <name type="primary">VWDE</name>
</gene>
<comment type="subcellular location">
    <subcellularLocation>
        <location evidence="9">Secreted</location>
    </subcellularLocation>
</comment>
<comment type="alternative products">
    <event type="alternative splicing"/>
    <isoform>
        <id>Q8N2E2-1</id>
        <name>1</name>
        <sequence type="displayed"/>
    </isoform>
    <isoform>
        <id>Q8N2E2-3</id>
        <name>2</name>
        <sequence type="described" ref="VSP_055465"/>
    </isoform>
</comment>
<comment type="sequence caution" evidence="9">
    <conflict type="frameshift">
        <sequence resource="EMBL-CDS" id="AAI44320"/>
    </conflict>
</comment>
<comment type="sequence caution" evidence="9">
    <conflict type="erroneous initiation">
        <sequence resource="EMBL-CDS" id="BAB55237"/>
    </conflict>
    <text>Truncated N-terminus.</text>
</comment>
<comment type="sequence caution" evidence="9">
    <conflict type="miscellaneous discrepancy">
        <sequence resource="EMBL-CDS" id="BAC11671"/>
    </conflict>
    <text>Intron retention.</text>
</comment>
<comment type="sequence caution" evidence="9">
    <conflict type="erroneous gene model prediction">
        <sequence resource="EMBL-CDS" id="EAW93644"/>
    </conflict>
</comment>
<keyword id="KW-0025">Alternative splicing</keyword>
<keyword id="KW-1015">Disulfide bond</keyword>
<keyword id="KW-0245">EGF-like domain</keyword>
<keyword id="KW-0325">Glycoprotein</keyword>
<keyword id="KW-1267">Proteomics identification</keyword>
<keyword id="KW-1185">Reference proteome</keyword>
<keyword id="KW-0677">Repeat</keyword>
<keyword id="KW-0964">Secreted</keyword>
<keyword id="KW-0732">Signal</keyword>
<protein>
    <recommendedName>
        <fullName>von Willebrand factor D and EGF domain-containing protein</fullName>
    </recommendedName>
</protein>
<evidence type="ECO:0000250" key="1"/>
<evidence type="ECO:0000255" key="2"/>
<evidence type="ECO:0000255" key="3">
    <source>
        <dbReference type="PROSITE-ProRule" id="PRU00076"/>
    </source>
</evidence>
<evidence type="ECO:0000255" key="4">
    <source>
        <dbReference type="PROSITE-ProRule" id="PRU00580"/>
    </source>
</evidence>
<evidence type="ECO:0000256" key="5">
    <source>
        <dbReference type="SAM" id="MobiDB-lite"/>
    </source>
</evidence>
<evidence type="ECO:0000269" key="6">
    <source>
    </source>
</evidence>
<evidence type="ECO:0000269" key="7">
    <source>
    </source>
</evidence>
<evidence type="ECO:0000303" key="8">
    <source>
    </source>
</evidence>
<evidence type="ECO:0000305" key="9"/>
<sequence>MPGGACVLVIALMFLAWGEAQECSPGGHQFLRSPYRSVRFDSWHLQQSAVQDLICDHSLSPGWYRFLILDRPAEMPTKCVEMNHCGTQAPIWLSLRDSETLPSPGEIKQLTACATWQFLFSTTKDCCLFQIPVSVRNCGNFSVYLLQPTQGCMGYCAEAISDARLHPCGSDETETGGDCVRQLAASLPPPPAGRPEVLVELIESRLFCRCSFDVPATKNSVGFHIAWSRLSSQEVKEELTQETTVQAFSLLELDGINLRLGDRIFCSASVFFLENPHVQSVAIESQEFFAGFKLQPELSTISEDGKEYYLRIESTVPIICSEFSELDQECKISLKLKTIGQGREHLGLNLALSSCHVDLLQTSSCANGTCSHTFVYYTAVTDFSRDGDRVSNIVVQPIVNEDFLWNNYIPDSIQIKVKDVPTAYCYTFTDPHIITFDGRVYDNFKTGTFVLYKSMSRDFEVHVRQWDCRSLHYPVSCNCGFVAQEGGDIVTFDMCNGQLRESQPYLFIKSQDVTRNIKISESYLGRKVTIWFSSGAFIRADLGEWGMSLTIRAPSVDYRNTLGLCGTFDENPENDFHDKNGMQIDQNFNNYVAFINEWRILPGKSMSDTLPVSMTSPGKPSYCSCSLDTAAYPSSEDLDSVSRSEIALGCKDLNHVSLSSLIPELDVTSEYINSDTLVREINKHTSPEEYNLNLFLQEKKHINLTKLGLNVQKHPGNEKEDSLQYLANKKYTQGRGSHSQEMRYNRQNRWKRQNFHEFPPLFAFPSLSQTDLEELTYFFPEDHAEDVQQEFFPSWPTPSGLTEYSTLTLCQETLANSSIGRLCLAFLGKRLDSVIEMCVKDVLLKDDLSWAEAGVALLENECEKRIVEEGKYNTEEYGTSIEDILSVLKCPNLCSGNGQCMEWGCACSPSFSSYDCSDSYDKAPEITELGNAGFCDVQKYNCMMVRVFGKGFKELPSIKCEVTKLQYNSSEWMPGEPIYTQTVFHNSRAVDCQLPTDVQQFDTMDLVGGKPTGKWQLKVSNDGYKFSNPKITVIYDGACQVCGLYKNDSCTIKENVCIIDGLCYVEGDKNPTSPCLICRPKISRFTWSFLENNQPPVIQALQDKLQTFYGENFEYQFVAFDPEGSDIHFTLDSGPEGASVSSAGLFMWKTDLLTTQQITVRLNDDCDAETRVTIEVTVKSCDCLNGGSCVSDRNFSPGSGVYLCVCLPGFHGSLCEVDISGCQSNPCGLGSYISGFHSYSCDCPPELKVETQFVNQFTTQTVVLTRSDKSVNKEEDDKNAQGRKRHVKPTSGNAFTICKYPCGKSRECVAPNICKCKPGYIGSNCQTALCDPDCKNHGKCIKPNICQCLPGHGGATCDEEHCNPPCQHGGTCLAGNLCTCPYGFVGPRCETMVCNRHCENGGQCLTPDICQCKPGWYGPTCSTALCDPVCLNGGSCNKPNTCLCPNGFFGEHCQNAFCHPPCKNGGHCMRNNVCVCREGYTGRRFQKSICDPTCMNGGKCVGPSTCSCPSGWSGKRCNTPICLQKCKNGGECIAPSICHCPSSWEGVRCQIPICNPKCLYGGRCIFPNVCSCRTEYSGVKCEKKIQIRRH</sequence>
<reference key="1">
    <citation type="journal article" date="2003" name="Nature">
        <title>The DNA sequence of human chromosome 7.</title>
        <authorList>
            <person name="Hillier L.W."/>
            <person name="Fulton R.S."/>
            <person name="Fulton L.A."/>
            <person name="Graves T.A."/>
            <person name="Pepin K.H."/>
            <person name="Wagner-McPherson C."/>
            <person name="Layman D."/>
            <person name="Maas J."/>
            <person name="Jaeger S."/>
            <person name="Walker R."/>
            <person name="Wylie K."/>
            <person name="Sekhon M."/>
            <person name="Becker M.C."/>
            <person name="O'Laughlin M.D."/>
            <person name="Schaller M.E."/>
            <person name="Fewell G.A."/>
            <person name="Delehaunty K.D."/>
            <person name="Miner T.L."/>
            <person name="Nash W.E."/>
            <person name="Cordes M."/>
            <person name="Du H."/>
            <person name="Sun H."/>
            <person name="Edwards J."/>
            <person name="Bradshaw-Cordum H."/>
            <person name="Ali J."/>
            <person name="Andrews S."/>
            <person name="Isak A."/>
            <person name="Vanbrunt A."/>
            <person name="Nguyen C."/>
            <person name="Du F."/>
            <person name="Lamar B."/>
            <person name="Courtney L."/>
            <person name="Kalicki J."/>
            <person name="Ozersky P."/>
            <person name="Bielicki L."/>
            <person name="Scott K."/>
            <person name="Holmes A."/>
            <person name="Harkins R."/>
            <person name="Harris A."/>
            <person name="Strong C.M."/>
            <person name="Hou S."/>
            <person name="Tomlinson C."/>
            <person name="Dauphin-Kohlberg S."/>
            <person name="Kozlowicz-Reilly A."/>
            <person name="Leonard S."/>
            <person name="Rohlfing T."/>
            <person name="Rock S.M."/>
            <person name="Tin-Wollam A.-M."/>
            <person name="Abbott A."/>
            <person name="Minx P."/>
            <person name="Maupin R."/>
            <person name="Strowmatt C."/>
            <person name="Latreille P."/>
            <person name="Miller N."/>
            <person name="Johnson D."/>
            <person name="Murray J."/>
            <person name="Woessner J.P."/>
            <person name="Wendl M.C."/>
            <person name="Yang S.-P."/>
            <person name="Schultz B.R."/>
            <person name="Wallis J.W."/>
            <person name="Spieth J."/>
            <person name="Bieri T.A."/>
            <person name="Nelson J.O."/>
            <person name="Berkowicz N."/>
            <person name="Wohldmann P.E."/>
            <person name="Cook L.L."/>
            <person name="Hickenbotham M.T."/>
            <person name="Eldred J."/>
            <person name="Williams D."/>
            <person name="Bedell J.A."/>
            <person name="Mardis E.R."/>
            <person name="Clifton S.W."/>
            <person name="Chissoe S.L."/>
            <person name="Marra M.A."/>
            <person name="Raymond C."/>
            <person name="Haugen E."/>
            <person name="Gillett W."/>
            <person name="Zhou Y."/>
            <person name="James R."/>
            <person name="Phelps K."/>
            <person name="Iadanoto S."/>
            <person name="Bubb K."/>
            <person name="Simms E."/>
            <person name="Levy R."/>
            <person name="Clendenning J."/>
            <person name="Kaul R."/>
            <person name="Kent W.J."/>
            <person name="Furey T.S."/>
            <person name="Baertsch R.A."/>
            <person name="Brent M.R."/>
            <person name="Keibler E."/>
            <person name="Flicek P."/>
            <person name="Bork P."/>
            <person name="Suyama M."/>
            <person name="Bailey J.A."/>
            <person name="Portnoy M.E."/>
            <person name="Torrents D."/>
            <person name="Chinwalla A.T."/>
            <person name="Gish W.R."/>
            <person name="Eddy S.R."/>
            <person name="McPherson J.D."/>
            <person name="Olson M.V."/>
            <person name="Eichler E.E."/>
            <person name="Green E.D."/>
            <person name="Waterston R.H."/>
            <person name="Wilson R.K."/>
        </authorList>
    </citation>
    <scope>NUCLEOTIDE SEQUENCE [LARGE SCALE GENOMIC DNA]</scope>
</reference>
<reference key="2">
    <citation type="submission" date="2005-07" db="EMBL/GenBank/DDBJ databases">
        <authorList>
            <person name="Mural R.J."/>
            <person name="Istrail S."/>
            <person name="Sutton G.G."/>
            <person name="Florea L."/>
            <person name="Halpern A.L."/>
            <person name="Mobarry C.M."/>
            <person name="Lippert R."/>
            <person name="Walenz B."/>
            <person name="Shatkay H."/>
            <person name="Dew I."/>
            <person name="Miller J.R."/>
            <person name="Flanigan M.J."/>
            <person name="Edwards N.J."/>
            <person name="Bolanos R."/>
            <person name="Fasulo D."/>
            <person name="Halldorsson B.V."/>
            <person name="Hannenhalli S."/>
            <person name="Turner R."/>
            <person name="Yooseph S."/>
            <person name="Lu F."/>
            <person name="Nusskern D.R."/>
            <person name="Shue B.C."/>
            <person name="Zheng X.H."/>
            <person name="Zhong F."/>
            <person name="Delcher A.L."/>
            <person name="Huson D.H."/>
            <person name="Kravitz S.A."/>
            <person name="Mouchard L."/>
            <person name="Reinert K."/>
            <person name="Remington K.A."/>
            <person name="Clark A.G."/>
            <person name="Waterman M.S."/>
            <person name="Eichler E.E."/>
            <person name="Adams M.D."/>
            <person name="Hunkapiller M.W."/>
            <person name="Myers E.W."/>
            <person name="Venter J.C."/>
        </authorList>
    </citation>
    <scope>NUCLEOTIDE SEQUENCE [LARGE SCALE GENOMIC DNA]</scope>
</reference>
<reference key="3">
    <citation type="journal article" date="2004" name="Genome Res.">
        <title>The status, quality, and expansion of the NIH full-length cDNA project: the Mammalian Gene Collection (MGC).</title>
        <authorList>
            <consortium name="The MGC Project Team"/>
        </authorList>
    </citation>
    <scope>NUCLEOTIDE SEQUENCE [LARGE SCALE MRNA] (ISOFORM 2)</scope>
    <scope>VARIANTS PHE-607; ASN-964 AND MET-1032</scope>
</reference>
<reference key="4">
    <citation type="journal article" date="2005" name="DNA Res.">
        <title>Signal sequence and keyword trap in silico for selection of full-length human cDNAs encoding secretion or membrane proteins from oligo-capped cDNA libraries.</title>
        <authorList>
            <person name="Otsuki T."/>
            <person name="Ota T."/>
            <person name="Nishikawa T."/>
            <person name="Hayashi K."/>
            <person name="Suzuki Y."/>
            <person name="Yamamoto J."/>
            <person name="Wakamatsu A."/>
            <person name="Kimura K."/>
            <person name="Sakamoto K."/>
            <person name="Hatano N."/>
            <person name="Kawai Y."/>
            <person name="Ishii S."/>
            <person name="Saito K."/>
            <person name="Kojima S."/>
            <person name="Sugiyama T."/>
            <person name="Ono T."/>
            <person name="Okano K."/>
            <person name="Yoshikawa Y."/>
            <person name="Aotsuka S."/>
            <person name="Sasaki N."/>
            <person name="Hattori A."/>
            <person name="Okumura K."/>
            <person name="Nagai K."/>
            <person name="Sugano S."/>
            <person name="Isogai T."/>
        </authorList>
    </citation>
    <scope>NUCLEOTIDE SEQUENCE [LARGE SCALE MRNA] OF 1-342 (ISOFORM 1)</scope>
</reference>
<reference key="5">
    <citation type="journal article" date="2004" name="Nat. Genet.">
        <title>Complete sequencing and characterization of 21,243 full-length human cDNAs.</title>
        <authorList>
            <person name="Ota T."/>
            <person name="Suzuki Y."/>
            <person name="Nishikawa T."/>
            <person name="Otsuki T."/>
            <person name="Sugiyama T."/>
            <person name="Irie R."/>
            <person name="Wakamatsu A."/>
            <person name="Hayashi K."/>
            <person name="Sato H."/>
            <person name="Nagai K."/>
            <person name="Kimura K."/>
            <person name="Makita H."/>
            <person name="Sekine M."/>
            <person name="Obayashi M."/>
            <person name="Nishi T."/>
            <person name="Shibahara T."/>
            <person name="Tanaka T."/>
            <person name="Ishii S."/>
            <person name="Yamamoto J."/>
            <person name="Saito K."/>
            <person name="Kawai Y."/>
            <person name="Isono Y."/>
            <person name="Nakamura Y."/>
            <person name="Nagahari K."/>
            <person name="Murakami K."/>
            <person name="Yasuda T."/>
            <person name="Iwayanagi T."/>
            <person name="Wagatsuma M."/>
            <person name="Shiratori A."/>
            <person name="Sudo H."/>
            <person name="Hosoiri T."/>
            <person name="Kaku Y."/>
            <person name="Kodaira H."/>
            <person name="Kondo H."/>
            <person name="Sugawara M."/>
            <person name="Takahashi M."/>
            <person name="Kanda K."/>
            <person name="Yokoi T."/>
            <person name="Furuya T."/>
            <person name="Kikkawa E."/>
            <person name="Omura Y."/>
            <person name="Abe K."/>
            <person name="Kamihara K."/>
            <person name="Katsuta N."/>
            <person name="Sato K."/>
            <person name="Tanikawa M."/>
            <person name="Yamazaki M."/>
            <person name="Ninomiya K."/>
            <person name="Ishibashi T."/>
            <person name="Yamashita H."/>
            <person name="Murakawa K."/>
            <person name="Fujimori K."/>
            <person name="Tanai H."/>
            <person name="Kimata M."/>
            <person name="Watanabe M."/>
            <person name="Hiraoka S."/>
            <person name="Chiba Y."/>
            <person name="Ishida S."/>
            <person name="Ono Y."/>
            <person name="Takiguchi S."/>
            <person name="Watanabe S."/>
            <person name="Yosida M."/>
            <person name="Hotuta T."/>
            <person name="Kusano J."/>
            <person name="Kanehori K."/>
            <person name="Takahashi-Fujii A."/>
            <person name="Hara H."/>
            <person name="Tanase T.-O."/>
            <person name="Nomura Y."/>
            <person name="Togiya S."/>
            <person name="Komai F."/>
            <person name="Hara R."/>
            <person name="Takeuchi K."/>
            <person name="Arita M."/>
            <person name="Imose N."/>
            <person name="Musashino K."/>
            <person name="Yuuki H."/>
            <person name="Oshima A."/>
            <person name="Sasaki N."/>
            <person name="Aotsuka S."/>
            <person name="Yoshikawa Y."/>
            <person name="Matsunawa H."/>
            <person name="Ichihara T."/>
            <person name="Shiohata N."/>
            <person name="Sano S."/>
            <person name="Moriya S."/>
            <person name="Momiyama H."/>
            <person name="Satoh N."/>
            <person name="Takami S."/>
            <person name="Terashima Y."/>
            <person name="Suzuki O."/>
            <person name="Nakagawa S."/>
            <person name="Senoh A."/>
            <person name="Mizoguchi H."/>
            <person name="Goto Y."/>
            <person name="Shimizu F."/>
            <person name="Wakebe H."/>
            <person name="Hishigaki H."/>
            <person name="Watanabe T."/>
            <person name="Sugiyama A."/>
            <person name="Takemoto M."/>
            <person name="Kawakami B."/>
            <person name="Yamazaki M."/>
            <person name="Watanabe K."/>
            <person name="Kumagai A."/>
            <person name="Itakura S."/>
            <person name="Fukuzumi Y."/>
            <person name="Fujimori Y."/>
            <person name="Komiyama M."/>
            <person name="Tashiro H."/>
            <person name="Tanigami A."/>
            <person name="Fujiwara T."/>
            <person name="Ono T."/>
            <person name="Yamada K."/>
            <person name="Fujii Y."/>
            <person name="Ozaki K."/>
            <person name="Hirao M."/>
            <person name="Ohmori Y."/>
            <person name="Kawabata A."/>
            <person name="Hikiji T."/>
            <person name="Kobatake N."/>
            <person name="Inagaki H."/>
            <person name="Ikema Y."/>
            <person name="Okamoto S."/>
            <person name="Okitani R."/>
            <person name="Kawakami T."/>
            <person name="Noguchi S."/>
            <person name="Itoh T."/>
            <person name="Shigeta K."/>
            <person name="Senba T."/>
            <person name="Matsumura K."/>
            <person name="Nakajima Y."/>
            <person name="Mizuno T."/>
            <person name="Morinaga M."/>
            <person name="Sasaki M."/>
            <person name="Togashi T."/>
            <person name="Oyama M."/>
            <person name="Hata H."/>
            <person name="Watanabe M."/>
            <person name="Komatsu T."/>
            <person name="Mizushima-Sugano J."/>
            <person name="Satoh T."/>
            <person name="Shirai Y."/>
            <person name="Takahashi Y."/>
            <person name="Nakagawa K."/>
            <person name="Okumura K."/>
            <person name="Nagase T."/>
            <person name="Nomura N."/>
            <person name="Kikuchi H."/>
            <person name="Masuho Y."/>
            <person name="Yamashita R."/>
            <person name="Nakai K."/>
            <person name="Yada T."/>
            <person name="Nakamura Y."/>
            <person name="Ohara O."/>
            <person name="Isogai T."/>
            <person name="Sugano S."/>
        </authorList>
    </citation>
    <scope>NUCLEOTIDE SEQUENCE [LARGE SCALE MRNA] OF 639-1590 (ISOFORM 1)</scope>
    <scope>VARIANTS LYS-1256 AND CYS-1485</scope>
    <source>
        <tissue>Teratocarcinoma</tissue>
    </source>
</reference>